<accession>Q28VQ6</accession>
<dbReference type="EC" id="7.4.2.8" evidence="1"/>
<dbReference type="EMBL" id="CP000264">
    <property type="protein sequence ID" value="ABD53206.1"/>
    <property type="molecule type" value="Genomic_DNA"/>
</dbReference>
<dbReference type="RefSeq" id="WP_011453415.1">
    <property type="nucleotide sequence ID" value="NC_007802.1"/>
</dbReference>
<dbReference type="SMR" id="Q28VQ6"/>
<dbReference type="STRING" id="290400.Jann_0289"/>
<dbReference type="KEGG" id="jan:Jann_0289"/>
<dbReference type="eggNOG" id="COG0653">
    <property type="taxonomic scope" value="Bacteria"/>
</dbReference>
<dbReference type="HOGENOM" id="CLU_005314_3_0_5"/>
<dbReference type="OrthoDB" id="9805579at2"/>
<dbReference type="Proteomes" id="UP000008326">
    <property type="component" value="Chromosome"/>
</dbReference>
<dbReference type="GO" id="GO:0031522">
    <property type="term" value="C:cell envelope Sec protein transport complex"/>
    <property type="evidence" value="ECO:0007669"/>
    <property type="project" value="TreeGrafter"/>
</dbReference>
<dbReference type="GO" id="GO:0005829">
    <property type="term" value="C:cytosol"/>
    <property type="evidence" value="ECO:0007669"/>
    <property type="project" value="TreeGrafter"/>
</dbReference>
<dbReference type="GO" id="GO:0005886">
    <property type="term" value="C:plasma membrane"/>
    <property type="evidence" value="ECO:0007669"/>
    <property type="project" value="UniProtKB-SubCell"/>
</dbReference>
<dbReference type="GO" id="GO:0005524">
    <property type="term" value="F:ATP binding"/>
    <property type="evidence" value="ECO:0007669"/>
    <property type="project" value="UniProtKB-UniRule"/>
</dbReference>
<dbReference type="GO" id="GO:0046872">
    <property type="term" value="F:metal ion binding"/>
    <property type="evidence" value="ECO:0007669"/>
    <property type="project" value="UniProtKB-KW"/>
</dbReference>
<dbReference type="GO" id="GO:0008564">
    <property type="term" value="F:protein-exporting ATPase activity"/>
    <property type="evidence" value="ECO:0007669"/>
    <property type="project" value="UniProtKB-EC"/>
</dbReference>
<dbReference type="GO" id="GO:0065002">
    <property type="term" value="P:intracellular protein transmembrane transport"/>
    <property type="evidence" value="ECO:0007669"/>
    <property type="project" value="UniProtKB-UniRule"/>
</dbReference>
<dbReference type="GO" id="GO:0017038">
    <property type="term" value="P:protein import"/>
    <property type="evidence" value="ECO:0007669"/>
    <property type="project" value="InterPro"/>
</dbReference>
<dbReference type="GO" id="GO:0006605">
    <property type="term" value="P:protein targeting"/>
    <property type="evidence" value="ECO:0007669"/>
    <property type="project" value="UniProtKB-UniRule"/>
</dbReference>
<dbReference type="GO" id="GO:0043952">
    <property type="term" value="P:protein transport by the Sec complex"/>
    <property type="evidence" value="ECO:0007669"/>
    <property type="project" value="TreeGrafter"/>
</dbReference>
<dbReference type="CDD" id="cd17928">
    <property type="entry name" value="DEXDc_SecA"/>
    <property type="match status" value="1"/>
</dbReference>
<dbReference type="CDD" id="cd18803">
    <property type="entry name" value="SF2_C_secA"/>
    <property type="match status" value="1"/>
</dbReference>
<dbReference type="FunFam" id="3.40.50.300:FF:000113">
    <property type="entry name" value="Preprotein translocase subunit SecA"/>
    <property type="match status" value="1"/>
</dbReference>
<dbReference type="FunFam" id="3.90.1440.10:FF:000001">
    <property type="entry name" value="Preprotein translocase subunit SecA"/>
    <property type="match status" value="1"/>
</dbReference>
<dbReference type="FunFam" id="1.10.3060.10:FF:000003">
    <property type="entry name" value="Protein translocase subunit SecA"/>
    <property type="match status" value="1"/>
</dbReference>
<dbReference type="Gene3D" id="1.10.3060.10">
    <property type="entry name" value="Helical scaffold and wing domains of SecA"/>
    <property type="match status" value="1"/>
</dbReference>
<dbReference type="Gene3D" id="3.40.50.300">
    <property type="entry name" value="P-loop containing nucleotide triphosphate hydrolases"/>
    <property type="match status" value="2"/>
</dbReference>
<dbReference type="Gene3D" id="3.90.1440.10">
    <property type="entry name" value="SecA, preprotein cross-linking domain"/>
    <property type="match status" value="1"/>
</dbReference>
<dbReference type="HAMAP" id="MF_01382">
    <property type="entry name" value="SecA"/>
    <property type="match status" value="1"/>
</dbReference>
<dbReference type="InterPro" id="IPR014001">
    <property type="entry name" value="Helicase_ATP-bd"/>
</dbReference>
<dbReference type="InterPro" id="IPR001650">
    <property type="entry name" value="Helicase_C-like"/>
</dbReference>
<dbReference type="InterPro" id="IPR027417">
    <property type="entry name" value="P-loop_NTPase"/>
</dbReference>
<dbReference type="InterPro" id="IPR004027">
    <property type="entry name" value="SEC_C_motif"/>
</dbReference>
<dbReference type="InterPro" id="IPR000185">
    <property type="entry name" value="SecA"/>
</dbReference>
<dbReference type="InterPro" id="IPR020937">
    <property type="entry name" value="SecA_CS"/>
</dbReference>
<dbReference type="InterPro" id="IPR011115">
    <property type="entry name" value="SecA_DEAD"/>
</dbReference>
<dbReference type="InterPro" id="IPR014018">
    <property type="entry name" value="SecA_motor_DEAD"/>
</dbReference>
<dbReference type="InterPro" id="IPR011130">
    <property type="entry name" value="SecA_preprotein_X-link_dom"/>
</dbReference>
<dbReference type="InterPro" id="IPR044722">
    <property type="entry name" value="SecA_SF2_C"/>
</dbReference>
<dbReference type="InterPro" id="IPR011116">
    <property type="entry name" value="SecA_Wing/Scaffold"/>
</dbReference>
<dbReference type="InterPro" id="IPR036266">
    <property type="entry name" value="SecA_Wing/Scaffold_sf"/>
</dbReference>
<dbReference type="InterPro" id="IPR036670">
    <property type="entry name" value="SecA_X-link_sf"/>
</dbReference>
<dbReference type="NCBIfam" id="NF009538">
    <property type="entry name" value="PRK12904.1"/>
    <property type="match status" value="1"/>
</dbReference>
<dbReference type="NCBIfam" id="TIGR00963">
    <property type="entry name" value="secA"/>
    <property type="match status" value="1"/>
</dbReference>
<dbReference type="PANTHER" id="PTHR30612:SF0">
    <property type="entry name" value="CHLOROPLAST PROTEIN-TRANSPORTING ATPASE"/>
    <property type="match status" value="1"/>
</dbReference>
<dbReference type="PANTHER" id="PTHR30612">
    <property type="entry name" value="SECA INNER MEMBRANE COMPONENT OF SEC PROTEIN SECRETION SYSTEM"/>
    <property type="match status" value="1"/>
</dbReference>
<dbReference type="Pfam" id="PF21090">
    <property type="entry name" value="P-loop_SecA"/>
    <property type="match status" value="1"/>
</dbReference>
<dbReference type="Pfam" id="PF02810">
    <property type="entry name" value="SEC-C"/>
    <property type="match status" value="1"/>
</dbReference>
<dbReference type="Pfam" id="PF07517">
    <property type="entry name" value="SecA_DEAD"/>
    <property type="match status" value="1"/>
</dbReference>
<dbReference type="Pfam" id="PF01043">
    <property type="entry name" value="SecA_PP_bind"/>
    <property type="match status" value="1"/>
</dbReference>
<dbReference type="Pfam" id="PF07516">
    <property type="entry name" value="SecA_SW"/>
    <property type="match status" value="1"/>
</dbReference>
<dbReference type="PRINTS" id="PR00906">
    <property type="entry name" value="SECA"/>
</dbReference>
<dbReference type="SMART" id="SM00957">
    <property type="entry name" value="SecA_DEAD"/>
    <property type="match status" value="1"/>
</dbReference>
<dbReference type="SMART" id="SM00958">
    <property type="entry name" value="SecA_PP_bind"/>
    <property type="match status" value="1"/>
</dbReference>
<dbReference type="SUPFAM" id="SSF81886">
    <property type="entry name" value="Helical scaffold and wing domains of SecA"/>
    <property type="match status" value="1"/>
</dbReference>
<dbReference type="SUPFAM" id="SSF52540">
    <property type="entry name" value="P-loop containing nucleoside triphosphate hydrolases"/>
    <property type="match status" value="2"/>
</dbReference>
<dbReference type="SUPFAM" id="SSF81767">
    <property type="entry name" value="Pre-protein crosslinking domain of SecA"/>
    <property type="match status" value="1"/>
</dbReference>
<dbReference type="PROSITE" id="PS01312">
    <property type="entry name" value="SECA"/>
    <property type="match status" value="1"/>
</dbReference>
<dbReference type="PROSITE" id="PS51196">
    <property type="entry name" value="SECA_MOTOR_DEAD"/>
    <property type="match status" value="1"/>
</dbReference>
<proteinExistence type="inferred from homology"/>
<sequence length="903" mass="100293">MLGLGSIAKKVFGSPNDRLVKSVRPIIAKINDMEPEFEALDDAGIVAKTAELRNRALNGEKLDDLLPEAFANCREAAKRALGLRAFDVQLIGGLFLHRGNIAEMKTGEGKTLVATFPAYLNGLTGEGVHVVTVNDYLAKRDSEWMGKVFTALGMTTGVVYPRQPDQEKRQAYACDVTYATNNELGFDYLRDNMRGSIAEMAQRGHNFAIVDEVDSILIDEARTPLIISGPTQDRSDLYMSIDKVIPLVQEHHYTLDEKTRQATFTDEGNDFLEETLSAEGILPEGQSLYDPESTTIVHHVTNALRAHKVFTKDKEYIVRDGEVVLVDEFTGRMMPGRRMSEGLHQAIEAKEGCKIQPENVTLASVTFQNYFRLYGTLGGMTGTATTEAEEFADIYGLGVVEIPTNRDIARIDDDDAVYRTGQEKYDAIVETIAEAHKKGQPVLVGTTSIEKSEMLGQLLTKADLPHSILNARQHEQEAQIVADAGKLGAVTIATNMAGRGTDIKLGGNLEFQIMEAIAADPDADPEEIRNRMEVEHATAEQAVKDAGGLYVLATERHESRRIDNQLRGRSGRQGDPGRSSFFLSLEDDLMRIFGSERLDKMLNTLGMKEGEAIVHPWVNKSLERAQAKVEGRNFDIRKQLLKFDDVMNDQRKVVFGQRRDIMGAEDIAEVAKDMRDQVIEDMVDTYMPPKTYADQWDVLGMKEAAQTTLGIDLPIEAWADEDGVDQEVATERLERAADEYMASKAAKFGPEQMRNIEKQVLLQTIDQKWQEHLLTLEHLRSVVGFRGYAQRDPLNEYKTESFQLFESMLDGLRTDVTEKLARIQPLTPEQQEQLMAQLRQQQAAAAGTEAVASAGGETGETAFPNAIPGFIEDDPSTWGNPGRNDDCPCGSGKKFKHCHGRLA</sequence>
<evidence type="ECO:0000255" key="1">
    <source>
        <dbReference type="HAMAP-Rule" id="MF_01382"/>
    </source>
</evidence>
<feature type="chain" id="PRO_0000320832" description="Protein translocase subunit SecA">
    <location>
        <begin position="1"/>
        <end position="903"/>
    </location>
</feature>
<feature type="binding site" evidence="1">
    <location>
        <position position="89"/>
    </location>
    <ligand>
        <name>ATP</name>
        <dbReference type="ChEBI" id="CHEBI:30616"/>
    </ligand>
</feature>
<feature type="binding site" evidence="1">
    <location>
        <begin position="107"/>
        <end position="111"/>
    </location>
    <ligand>
        <name>ATP</name>
        <dbReference type="ChEBI" id="CHEBI:30616"/>
    </ligand>
</feature>
<feature type="binding site" evidence="1">
    <location>
        <position position="502"/>
    </location>
    <ligand>
        <name>ATP</name>
        <dbReference type="ChEBI" id="CHEBI:30616"/>
    </ligand>
</feature>
<feature type="binding site" evidence="1">
    <location>
        <position position="887"/>
    </location>
    <ligand>
        <name>Zn(2+)</name>
        <dbReference type="ChEBI" id="CHEBI:29105"/>
    </ligand>
</feature>
<feature type="binding site" evidence="1">
    <location>
        <position position="889"/>
    </location>
    <ligand>
        <name>Zn(2+)</name>
        <dbReference type="ChEBI" id="CHEBI:29105"/>
    </ligand>
</feature>
<feature type="binding site" evidence="1">
    <location>
        <position position="898"/>
    </location>
    <ligand>
        <name>Zn(2+)</name>
        <dbReference type="ChEBI" id="CHEBI:29105"/>
    </ligand>
</feature>
<feature type="binding site" evidence="1">
    <location>
        <position position="899"/>
    </location>
    <ligand>
        <name>Zn(2+)</name>
        <dbReference type="ChEBI" id="CHEBI:29105"/>
    </ligand>
</feature>
<organism>
    <name type="scientific">Jannaschia sp. (strain CCS1)</name>
    <dbReference type="NCBI Taxonomy" id="290400"/>
    <lineage>
        <taxon>Bacteria</taxon>
        <taxon>Pseudomonadati</taxon>
        <taxon>Pseudomonadota</taxon>
        <taxon>Alphaproteobacteria</taxon>
        <taxon>Rhodobacterales</taxon>
        <taxon>Roseobacteraceae</taxon>
        <taxon>Jannaschia</taxon>
    </lineage>
</organism>
<name>SECA_JANSC</name>
<gene>
    <name evidence="1" type="primary">secA</name>
    <name type="ordered locus">Jann_0289</name>
</gene>
<reference key="1">
    <citation type="submission" date="2006-02" db="EMBL/GenBank/DDBJ databases">
        <title>Complete sequence of chromosome of Jannaschia sp. CCS1.</title>
        <authorList>
            <consortium name="US DOE Joint Genome Institute"/>
            <person name="Copeland A."/>
            <person name="Lucas S."/>
            <person name="Lapidus A."/>
            <person name="Barry K."/>
            <person name="Detter J.C."/>
            <person name="Glavina del Rio T."/>
            <person name="Hammon N."/>
            <person name="Israni S."/>
            <person name="Pitluck S."/>
            <person name="Brettin T."/>
            <person name="Bruce D."/>
            <person name="Han C."/>
            <person name="Tapia R."/>
            <person name="Gilna P."/>
            <person name="Chertkov O."/>
            <person name="Saunders E."/>
            <person name="Schmutz J."/>
            <person name="Larimer F."/>
            <person name="Land M."/>
            <person name="Kyrpides N."/>
            <person name="Lykidis A."/>
            <person name="Moran M.A."/>
            <person name="Belas R."/>
            <person name="Ye W."/>
            <person name="Buchan A."/>
            <person name="Gonzalez J.M."/>
            <person name="Schell M.A."/>
            <person name="Richardson P."/>
        </authorList>
    </citation>
    <scope>NUCLEOTIDE SEQUENCE [LARGE SCALE GENOMIC DNA]</scope>
    <source>
        <strain>CCS1</strain>
    </source>
</reference>
<keyword id="KW-0067">ATP-binding</keyword>
<keyword id="KW-0997">Cell inner membrane</keyword>
<keyword id="KW-1003">Cell membrane</keyword>
<keyword id="KW-0963">Cytoplasm</keyword>
<keyword id="KW-0472">Membrane</keyword>
<keyword id="KW-0479">Metal-binding</keyword>
<keyword id="KW-0547">Nucleotide-binding</keyword>
<keyword id="KW-0653">Protein transport</keyword>
<keyword id="KW-1185">Reference proteome</keyword>
<keyword id="KW-1278">Translocase</keyword>
<keyword id="KW-0811">Translocation</keyword>
<keyword id="KW-0813">Transport</keyword>
<keyword id="KW-0862">Zinc</keyword>
<comment type="function">
    <text evidence="1">Part of the Sec protein translocase complex. Interacts with the SecYEG preprotein conducting channel. Has a central role in coupling the hydrolysis of ATP to the transfer of proteins into and across the cell membrane, serving both as a receptor for the preprotein-SecB complex and as an ATP-driven molecular motor driving the stepwise translocation of polypeptide chains across the membrane.</text>
</comment>
<comment type="catalytic activity">
    <reaction evidence="1">
        <text>ATP + H2O + cellular proteinSide 1 = ADP + phosphate + cellular proteinSide 2.</text>
        <dbReference type="EC" id="7.4.2.8"/>
    </reaction>
</comment>
<comment type="cofactor">
    <cofactor evidence="1">
        <name>Zn(2+)</name>
        <dbReference type="ChEBI" id="CHEBI:29105"/>
    </cofactor>
    <text evidence="1">May bind 1 zinc ion per subunit.</text>
</comment>
<comment type="subunit">
    <text evidence="1">Monomer and homodimer. Part of the essential Sec protein translocation apparatus which comprises SecA, SecYEG and auxiliary proteins SecDF-YajC and YidC.</text>
</comment>
<comment type="subcellular location">
    <subcellularLocation>
        <location evidence="1">Cell inner membrane</location>
        <topology evidence="1">Peripheral membrane protein</topology>
        <orientation evidence="1">Cytoplasmic side</orientation>
    </subcellularLocation>
    <subcellularLocation>
        <location evidence="1">Cytoplasm</location>
    </subcellularLocation>
    <text evidence="1">Distribution is 50-50.</text>
</comment>
<comment type="similarity">
    <text evidence="1">Belongs to the SecA family.</text>
</comment>
<protein>
    <recommendedName>
        <fullName evidence="1">Protein translocase subunit SecA</fullName>
        <ecNumber evidence="1">7.4.2.8</ecNumber>
    </recommendedName>
</protein>